<comment type="function">
    <text evidence="2">Acid protease active in intracellular protein breakdown. Plays a role in APP processing following cleavage and activation by ADAM30 which leads to APP degradation.</text>
</comment>
<comment type="catalytic activity">
    <reaction>
        <text>Specificity similar to, but narrower than, that of pepsin A. Does not cleave the 4-Gln-|-His-5 bond in B chain of insulin.</text>
        <dbReference type="EC" id="3.4.23.5"/>
    </reaction>
</comment>
<comment type="subunit">
    <text evidence="2 3">Consists of a light chain and a heavy chain. Interacts with ADAM30; this leads to activation of CTSD. Interacts with GRN; stabilizes CTSD; increases its proteolytic activity (By similarity).</text>
</comment>
<comment type="subcellular location">
    <subcellularLocation>
        <location>Lysosome</location>
    </subcellularLocation>
    <subcellularLocation>
        <location evidence="1">Melanosome</location>
    </subcellularLocation>
    <subcellularLocation>
        <location evidence="1">Secreted</location>
        <location evidence="1">Extracellular space</location>
    </subcellularLocation>
</comment>
<comment type="PTM">
    <text evidence="2">N- and O-glycosylated.</text>
</comment>
<comment type="PTM">
    <text evidence="2">Undergoes proteolytic cleavage and activation by ADAM30.</text>
</comment>
<comment type="similarity">
    <text evidence="7">Belongs to the peptidase A1 family.</text>
</comment>
<name>CATD_BOVIN</name>
<evidence type="ECO:0000250" key="1"/>
<evidence type="ECO:0000250" key="2">
    <source>
        <dbReference type="UniProtKB" id="P07339"/>
    </source>
</evidence>
<evidence type="ECO:0000250" key="3">
    <source>
        <dbReference type="UniProtKB" id="P18242"/>
    </source>
</evidence>
<evidence type="ECO:0000255" key="4"/>
<evidence type="ECO:0000255" key="5">
    <source>
        <dbReference type="PROSITE-ProRule" id="PRU01103"/>
    </source>
</evidence>
<evidence type="ECO:0000269" key="6">
    <source>
    </source>
</evidence>
<evidence type="ECO:0000305" key="7"/>
<accession>P80209</accession>
<accession>Q9TS27</accession>
<protein>
    <recommendedName>
        <fullName>Cathepsin D</fullName>
        <ecNumber>3.4.23.5</ecNumber>
    </recommendedName>
</protein>
<proteinExistence type="evidence at protein level"/>
<gene>
    <name type="primary">CTSD</name>
</gene>
<feature type="propeptide" id="PRO_0000025947" description="Activation peptide" evidence="6">
    <location>
        <begin position="1"/>
        <end position="44"/>
    </location>
</feature>
<feature type="chain" id="PRO_0000025948" description="Cathepsin D">
    <location>
        <begin position="45"/>
        <end position="390"/>
    </location>
</feature>
<feature type="domain" description="Peptidase A1" evidence="5">
    <location>
        <begin position="59"/>
        <end position="385"/>
    </location>
</feature>
<feature type="active site">
    <location>
        <position position="77"/>
    </location>
</feature>
<feature type="active site">
    <location>
        <position position="273"/>
    </location>
</feature>
<feature type="glycosylation site" description="N-linked (GlcNAc...) asparagine" evidence="4">
    <location>
        <position position="114"/>
    </location>
</feature>
<feature type="glycosylation site" description="N-linked (GlcNAc...) asparagine" evidence="4">
    <location>
        <position position="241"/>
    </location>
</feature>
<feature type="disulfide bond">
    <location>
        <begin position="71"/>
        <end position="140"/>
    </location>
</feature>
<feature type="disulfide bond">
    <location>
        <begin position="90"/>
        <end position="97"/>
    </location>
</feature>
<feature type="disulfide bond">
    <location>
        <begin position="264"/>
        <end position="268"/>
    </location>
</feature>
<feature type="disulfide bond">
    <location>
        <begin position="307"/>
        <end position="344"/>
    </location>
</feature>
<keyword id="KW-0064">Aspartyl protease</keyword>
<keyword id="KW-0903">Direct protein sequencing</keyword>
<keyword id="KW-1015">Disulfide bond</keyword>
<keyword id="KW-0325">Glycoprotein</keyword>
<keyword id="KW-0378">Hydrolase</keyword>
<keyword id="KW-0458">Lysosome</keyword>
<keyword id="KW-0645">Protease</keyword>
<keyword id="KW-1185">Reference proteome</keyword>
<keyword id="KW-0964">Secreted</keyword>
<keyword id="KW-0865">Zymogen</keyword>
<organism>
    <name type="scientific">Bos taurus</name>
    <name type="common">Bovine</name>
    <dbReference type="NCBI Taxonomy" id="9913"/>
    <lineage>
        <taxon>Eukaryota</taxon>
        <taxon>Metazoa</taxon>
        <taxon>Chordata</taxon>
        <taxon>Craniata</taxon>
        <taxon>Vertebrata</taxon>
        <taxon>Euteleostomi</taxon>
        <taxon>Mammalia</taxon>
        <taxon>Eutheria</taxon>
        <taxon>Laurasiatheria</taxon>
        <taxon>Artiodactyla</taxon>
        <taxon>Ruminantia</taxon>
        <taxon>Pecora</taxon>
        <taxon>Bovidae</taxon>
        <taxon>Bovinae</taxon>
        <taxon>Bos</taxon>
    </lineage>
</organism>
<reference key="1">
    <citation type="journal article" date="1993" name="FEBS Lett.">
        <title>Procathepsin D cannot autoactivate to cathepsin D at acid pH.</title>
        <authorList>
            <person name="Larsen L.B."/>
            <person name="Boisen A."/>
            <person name="Petersen T.E."/>
        </authorList>
    </citation>
    <scope>PROTEIN SEQUENCE OF 1-48</scope>
    <source>
        <tissue>Milk</tissue>
    </source>
</reference>
<reference key="2">
    <citation type="journal article" date="1993" name="EMBO J.">
        <title>Two crystal structures for cathepsin D: the lysosomal targeting signal and active site.</title>
        <authorList>
            <person name="Metcalf P."/>
            <person name="Fusek M."/>
        </authorList>
    </citation>
    <scope>PROTEIN SEQUENCE OF 45-390</scope>
    <scope>X-RAY CRYSTALLOGRAPHY (3 ANGSTROMS)</scope>
    <source>
        <tissue>Liver</tissue>
    </source>
</reference>
<sequence length="390" mass="42491">VIRIPLHKFTSIRRTMSEAAGXVXXLIAKGPISKYATGEPAVRQGPIPELLKNYMDAQYYGEIGIGTPPQCFTVVFDTGSANLWVPSIHCKLLDIACWTHRKYNSDKSSTYVKNGTTFDIHYGSGSLSGYLSQDTVSVPCNPSSSSPGGVTVQRQTFGEAIKQPGVVFIAAKFDGILGMAYPRISVNNVLPVFDNLMQQKLVDKNVFSFFLNRDPKAQPGGELMLGGTDSKYYRGSLMFHNVTRQAYWQIHMDQLDVGSSLTVCKGGCEAIVDTGTSLIVGPVEEVRELQKAIGAVPLIQGEYMIPCEKVSSLPEVTVKLGGKDYALSPEDYALKVSQAETTVCLSGFMGMDIPPPGGPLWILGDVFIGRYYTVFDRDQNRVGLAEAARL</sequence>
<dbReference type="EC" id="3.4.23.5"/>
<dbReference type="PIR" id="S32383">
    <property type="entry name" value="S32383"/>
</dbReference>
<dbReference type="FunCoup" id="P80209">
    <property type="interactions" value="1353"/>
</dbReference>
<dbReference type="STRING" id="9913.ENSBTAP00000010022"/>
<dbReference type="BindingDB" id="P80209"/>
<dbReference type="ChEMBL" id="CHEMBL4106"/>
<dbReference type="MEROPS" id="A01.009"/>
<dbReference type="GlyCosmos" id="P80209">
    <property type="glycosylation" value="2 sites, No reported glycans"/>
</dbReference>
<dbReference type="GlyGen" id="P80209">
    <property type="glycosylation" value="2 sites"/>
</dbReference>
<dbReference type="PaxDb" id="9913-ENSBTAP00000010022"/>
<dbReference type="PeptideAtlas" id="P80209"/>
<dbReference type="eggNOG" id="KOG1339">
    <property type="taxonomic scope" value="Eukaryota"/>
</dbReference>
<dbReference type="InParanoid" id="P80209"/>
<dbReference type="OrthoDB" id="771136at2759"/>
<dbReference type="Proteomes" id="UP000009136">
    <property type="component" value="Unplaced"/>
</dbReference>
<dbReference type="GO" id="GO:0005615">
    <property type="term" value="C:extracellular space"/>
    <property type="evidence" value="ECO:0000318"/>
    <property type="project" value="GO_Central"/>
</dbReference>
<dbReference type="GO" id="GO:0005764">
    <property type="term" value="C:lysosome"/>
    <property type="evidence" value="ECO:0000250"/>
    <property type="project" value="UniProtKB"/>
</dbReference>
<dbReference type="GO" id="GO:0042470">
    <property type="term" value="C:melanosome"/>
    <property type="evidence" value="ECO:0007669"/>
    <property type="project" value="UniProtKB-SubCell"/>
</dbReference>
<dbReference type="GO" id="GO:0004190">
    <property type="term" value="F:aspartic-type endopeptidase activity"/>
    <property type="evidence" value="ECO:0000318"/>
    <property type="project" value="GO_Central"/>
</dbReference>
<dbReference type="GO" id="GO:0006508">
    <property type="term" value="P:proteolysis"/>
    <property type="evidence" value="ECO:0000318"/>
    <property type="project" value="GO_Central"/>
</dbReference>
<dbReference type="CDD" id="cd05490">
    <property type="entry name" value="Cathepsin_D2"/>
    <property type="match status" value="1"/>
</dbReference>
<dbReference type="FunFam" id="2.40.70.10:FF:000039">
    <property type="entry name" value="Cathepsin D preproprotein"/>
    <property type="match status" value="1"/>
</dbReference>
<dbReference type="FunFam" id="2.40.70.10:FF:000047">
    <property type="entry name" value="Cathepsin D preproprotein"/>
    <property type="match status" value="1"/>
</dbReference>
<dbReference type="Gene3D" id="2.40.70.10">
    <property type="entry name" value="Acid Proteases"/>
    <property type="match status" value="2"/>
</dbReference>
<dbReference type="InterPro" id="IPR001461">
    <property type="entry name" value="Aspartic_peptidase_A1"/>
</dbReference>
<dbReference type="InterPro" id="IPR001969">
    <property type="entry name" value="Aspartic_peptidase_AS"/>
</dbReference>
<dbReference type="InterPro" id="IPR012848">
    <property type="entry name" value="Aspartic_peptidase_N"/>
</dbReference>
<dbReference type="InterPro" id="IPR033144">
    <property type="entry name" value="Cathepsin_D"/>
</dbReference>
<dbReference type="InterPro" id="IPR033121">
    <property type="entry name" value="PEPTIDASE_A1"/>
</dbReference>
<dbReference type="InterPro" id="IPR021109">
    <property type="entry name" value="Peptidase_aspartic_dom_sf"/>
</dbReference>
<dbReference type="PANTHER" id="PTHR47966">
    <property type="entry name" value="BETA-SITE APP-CLEAVING ENZYME, ISOFORM A-RELATED"/>
    <property type="match status" value="1"/>
</dbReference>
<dbReference type="PANTHER" id="PTHR47966:SF42">
    <property type="entry name" value="CATHEPSIN D"/>
    <property type="match status" value="1"/>
</dbReference>
<dbReference type="Pfam" id="PF07966">
    <property type="entry name" value="A1_Propeptide"/>
    <property type="match status" value="1"/>
</dbReference>
<dbReference type="Pfam" id="PF00026">
    <property type="entry name" value="Asp"/>
    <property type="match status" value="1"/>
</dbReference>
<dbReference type="PRINTS" id="PR00792">
    <property type="entry name" value="PEPSIN"/>
</dbReference>
<dbReference type="SUPFAM" id="SSF50630">
    <property type="entry name" value="Acid proteases"/>
    <property type="match status" value="1"/>
</dbReference>
<dbReference type="PROSITE" id="PS00141">
    <property type="entry name" value="ASP_PROTEASE"/>
    <property type="match status" value="2"/>
</dbReference>
<dbReference type="PROSITE" id="PS51767">
    <property type="entry name" value="PEPTIDASE_A1"/>
    <property type="match status" value="1"/>
</dbReference>